<accession>Q2YXD9</accession>
<protein>
    <recommendedName>
        <fullName evidence="1">UDP-N-acetylmuramoylalanine--D-glutamate ligase</fullName>
        <ecNumber evidence="1">6.3.2.9</ecNumber>
    </recommendedName>
    <alternativeName>
        <fullName evidence="1">D-glutamic acid-adding enzyme</fullName>
    </alternativeName>
    <alternativeName>
        <fullName evidence="1">UDP-N-acetylmuramoyl-L-alanyl-D-glutamate synthetase</fullName>
    </alternativeName>
</protein>
<comment type="function">
    <text evidence="1">Cell wall formation. Catalyzes the addition of glutamate to the nucleotide precursor UDP-N-acetylmuramoyl-L-alanine (UMA).</text>
</comment>
<comment type="catalytic activity">
    <reaction evidence="1">
        <text>UDP-N-acetyl-alpha-D-muramoyl-L-alanine + D-glutamate + ATP = UDP-N-acetyl-alpha-D-muramoyl-L-alanyl-D-glutamate + ADP + phosphate + H(+)</text>
        <dbReference type="Rhea" id="RHEA:16429"/>
        <dbReference type="ChEBI" id="CHEBI:15378"/>
        <dbReference type="ChEBI" id="CHEBI:29986"/>
        <dbReference type="ChEBI" id="CHEBI:30616"/>
        <dbReference type="ChEBI" id="CHEBI:43474"/>
        <dbReference type="ChEBI" id="CHEBI:83898"/>
        <dbReference type="ChEBI" id="CHEBI:83900"/>
        <dbReference type="ChEBI" id="CHEBI:456216"/>
        <dbReference type="EC" id="6.3.2.9"/>
    </reaction>
</comment>
<comment type="pathway">
    <text evidence="1">Cell wall biogenesis; peptidoglycan biosynthesis.</text>
</comment>
<comment type="subcellular location">
    <subcellularLocation>
        <location evidence="1">Cytoplasm</location>
    </subcellularLocation>
</comment>
<comment type="similarity">
    <text evidence="1">Belongs to the MurCDEF family.</text>
</comment>
<organism>
    <name type="scientific">Staphylococcus aureus (strain bovine RF122 / ET3-1)</name>
    <dbReference type="NCBI Taxonomy" id="273036"/>
    <lineage>
        <taxon>Bacteria</taxon>
        <taxon>Bacillati</taxon>
        <taxon>Bacillota</taxon>
        <taxon>Bacilli</taxon>
        <taxon>Bacillales</taxon>
        <taxon>Staphylococcaceae</taxon>
        <taxon>Staphylococcus</taxon>
    </lineage>
</organism>
<evidence type="ECO:0000255" key="1">
    <source>
        <dbReference type="HAMAP-Rule" id="MF_00639"/>
    </source>
</evidence>
<dbReference type="EC" id="6.3.2.9" evidence="1"/>
<dbReference type="EMBL" id="AJ938182">
    <property type="protein sequence ID" value="CAI80735.1"/>
    <property type="molecule type" value="Genomic_DNA"/>
</dbReference>
<dbReference type="RefSeq" id="WP_000935991.1">
    <property type="nucleotide sequence ID" value="NC_007622.1"/>
</dbReference>
<dbReference type="SMR" id="Q2YXD9"/>
<dbReference type="KEGG" id="sab:SAB1047"/>
<dbReference type="HOGENOM" id="CLU_032540_0_1_9"/>
<dbReference type="UniPathway" id="UPA00219"/>
<dbReference type="GO" id="GO:0005737">
    <property type="term" value="C:cytoplasm"/>
    <property type="evidence" value="ECO:0007669"/>
    <property type="project" value="UniProtKB-SubCell"/>
</dbReference>
<dbReference type="GO" id="GO:0005524">
    <property type="term" value="F:ATP binding"/>
    <property type="evidence" value="ECO:0007669"/>
    <property type="project" value="UniProtKB-UniRule"/>
</dbReference>
<dbReference type="GO" id="GO:0008764">
    <property type="term" value="F:UDP-N-acetylmuramoylalanine-D-glutamate ligase activity"/>
    <property type="evidence" value="ECO:0007669"/>
    <property type="project" value="UniProtKB-UniRule"/>
</dbReference>
<dbReference type="GO" id="GO:0051301">
    <property type="term" value="P:cell division"/>
    <property type="evidence" value="ECO:0007669"/>
    <property type="project" value="UniProtKB-KW"/>
</dbReference>
<dbReference type="GO" id="GO:0071555">
    <property type="term" value="P:cell wall organization"/>
    <property type="evidence" value="ECO:0007669"/>
    <property type="project" value="UniProtKB-KW"/>
</dbReference>
<dbReference type="GO" id="GO:0009252">
    <property type="term" value="P:peptidoglycan biosynthetic process"/>
    <property type="evidence" value="ECO:0007669"/>
    <property type="project" value="UniProtKB-UniRule"/>
</dbReference>
<dbReference type="GO" id="GO:0008360">
    <property type="term" value="P:regulation of cell shape"/>
    <property type="evidence" value="ECO:0007669"/>
    <property type="project" value="UniProtKB-KW"/>
</dbReference>
<dbReference type="Gene3D" id="3.90.190.20">
    <property type="entry name" value="Mur ligase, C-terminal domain"/>
    <property type="match status" value="1"/>
</dbReference>
<dbReference type="Gene3D" id="3.40.1190.10">
    <property type="entry name" value="Mur-like, catalytic domain"/>
    <property type="match status" value="1"/>
</dbReference>
<dbReference type="Gene3D" id="3.40.50.720">
    <property type="entry name" value="NAD(P)-binding Rossmann-like Domain"/>
    <property type="match status" value="1"/>
</dbReference>
<dbReference type="HAMAP" id="MF_00639">
    <property type="entry name" value="MurD"/>
    <property type="match status" value="1"/>
</dbReference>
<dbReference type="InterPro" id="IPR036565">
    <property type="entry name" value="Mur-like_cat_sf"/>
</dbReference>
<dbReference type="InterPro" id="IPR004101">
    <property type="entry name" value="Mur_ligase_C"/>
</dbReference>
<dbReference type="InterPro" id="IPR036615">
    <property type="entry name" value="Mur_ligase_C_dom_sf"/>
</dbReference>
<dbReference type="InterPro" id="IPR013221">
    <property type="entry name" value="Mur_ligase_cen"/>
</dbReference>
<dbReference type="InterPro" id="IPR005762">
    <property type="entry name" value="MurD"/>
</dbReference>
<dbReference type="NCBIfam" id="TIGR01087">
    <property type="entry name" value="murD"/>
    <property type="match status" value="1"/>
</dbReference>
<dbReference type="PANTHER" id="PTHR43692">
    <property type="entry name" value="UDP-N-ACETYLMURAMOYLALANINE--D-GLUTAMATE LIGASE"/>
    <property type="match status" value="1"/>
</dbReference>
<dbReference type="PANTHER" id="PTHR43692:SF1">
    <property type="entry name" value="UDP-N-ACETYLMURAMOYLALANINE--D-GLUTAMATE LIGASE"/>
    <property type="match status" value="1"/>
</dbReference>
<dbReference type="Pfam" id="PF02875">
    <property type="entry name" value="Mur_ligase_C"/>
    <property type="match status" value="1"/>
</dbReference>
<dbReference type="Pfam" id="PF08245">
    <property type="entry name" value="Mur_ligase_M"/>
    <property type="match status" value="1"/>
</dbReference>
<dbReference type="Pfam" id="PF21799">
    <property type="entry name" value="MurD-like_N"/>
    <property type="match status" value="1"/>
</dbReference>
<dbReference type="SUPFAM" id="SSF51984">
    <property type="entry name" value="MurCD N-terminal domain"/>
    <property type="match status" value="1"/>
</dbReference>
<dbReference type="SUPFAM" id="SSF53623">
    <property type="entry name" value="MurD-like peptide ligases, catalytic domain"/>
    <property type="match status" value="1"/>
</dbReference>
<dbReference type="SUPFAM" id="SSF53244">
    <property type="entry name" value="MurD-like peptide ligases, peptide-binding domain"/>
    <property type="match status" value="1"/>
</dbReference>
<name>MURD_STAAB</name>
<feature type="chain" id="PRO_0000257242" description="UDP-N-acetylmuramoylalanine--D-glutamate ligase">
    <location>
        <begin position="1"/>
        <end position="449"/>
    </location>
</feature>
<feature type="binding site" evidence="1">
    <location>
        <begin position="118"/>
        <end position="124"/>
    </location>
    <ligand>
        <name>ATP</name>
        <dbReference type="ChEBI" id="CHEBI:30616"/>
    </ligand>
</feature>
<reference key="1">
    <citation type="journal article" date="2007" name="PLoS ONE">
        <title>Molecular correlates of host specialization in Staphylococcus aureus.</title>
        <authorList>
            <person name="Herron-Olson L."/>
            <person name="Fitzgerald J.R."/>
            <person name="Musser J.M."/>
            <person name="Kapur V."/>
        </authorList>
    </citation>
    <scope>NUCLEOTIDE SEQUENCE [LARGE SCALE GENOMIC DNA]</scope>
    <source>
        <strain>bovine RF122 / ET3-1</strain>
    </source>
</reference>
<proteinExistence type="inferred from homology"/>
<keyword id="KW-0067">ATP-binding</keyword>
<keyword id="KW-0131">Cell cycle</keyword>
<keyword id="KW-0132">Cell division</keyword>
<keyword id="KW-0133">Cell shape</keyword>
<keyword id="KW-0961">Cell wall biogenesis/degradation</keyword>
<keyword id="KW-0963">Cytoplasm</keyword>
<keyword id="KW-0436">Ligase</keyword>
<keyword id="KW-0547">Nucleotide-binding</keyword>
<keyword id="KW-0573">Peptidoglycan synthesis</keyword>
<sequence>MLNYTGLENKNVLVVGLAKSGYEAAKLLSKLGANVTVNDGKDLSQDAHAKDLESMGISVVSGSHPLTLLDNNPIIVKNPGIPYTVSIIDEAVKRGLKILTEVELSYLISEAPIIAVTGTNGKTTVTSLIGDMFKKSRLTGRLSGNIGYVASKVAQEVKPTDYLVTELSSFQLLGIEKYKPHIAIITNIYSAHLDYHENLENYQNAKKQIYKNQTEEDYLICNYHQRQVIESEELKAKTLYFSTQQEVDGIYIKDGFIVYKGVRIINTEDLVLPGEHNLENILAAVLACILAGVPIKAIIDSLTTFSGIEHRLQYVGTNRTNKYYNDSKATNTLATQFALNSFNQPIIWLCGGLDRGNEFDELIPYMENVRAMVVFGQTKAKFAKLGNSQGKSVIEANNVEDAVDKVQDIIEPNDVVLLSPACASWDQYSTFEERGEKFIERFRAHLPSY</sequence>
<gene>
    <name evidence="1" type="primary">murD</name>
    <name type="ordered locus">SAB1047</name>
</gene>